<keyword id="KW-0963">Cytoplasm</keyword>
<keyword id="KW-0539">Nucleus</keyword>
<keyword id="KW-1185">Reference proteome</keyword>
<name>NACB_SCHPO</name>
<dbReference type="EMBL" id="U49084">
    <property type="protein sequence ID" value="AAB40599.1"/>
    <property type="molecule type" value="mRNA"/>
</dbReference>
<dbReference type="EMBL" id="CU329670">
    <property type="protein sequence ID" value="CAB11717.1"/>
    <property type="molecule type" value="Genomic_DNA"/>
</dbReference>
<dbReference type="PIR" id="S71926">
    <property type="entry name" value="S71926"/>
</dbReference>
<dbReference type="PIR" id="T38818">
    <property type="entry name" value="T38818"/>
</dbReference>
<dbReference type="RefSeq" id="NP_594757.1">
    <property type="nucleotide sequence ID" value="NM_001020184.2"/>
</dbReference>
<dbReference type="SMR" id="Q92371"/>
<dbReference type="BioGRID" id="279933">
    <property type="interactions" value="33"/>
</dbReference>
<dbReference type="FunCoup" id="Q92371">
    <property type="interactions" value="756"/>
</dbReference>
<dbReference type="STRING" id="284812.Q92371"/>
<dbReference type="iPTMnet" id="Q92371"/>
<dbReference type="PaxDb" id="4896-SPAC4F10.14c.1"/>
<dbReference type="EnsemblFungi" id="SPAC4F10.14c.1">
    <property type="protein sequence ID" value="SPAC4F10.14c.1:pep"/>
    <property type="gene ID" value="SPAC4F10.14c"/>
</dbReference>
<dbReference type="GeneID" id="2543515"/>
<dbReference type="KEGG" id="spo:2543515"/>
<dbReference type="PomBase" id="SPAC4F10.14c">
    <property type="gene designation" value="btf3"/>
</dbReference>
<dbReference type="VEuPathDB" id="FungiDB:SPAC4F10.14c"/>
<dbReference type="eggNOG" id="KOG2240">
    <property type="taxonomic scope" value="Eukaryota"/>
</dbReference>
<dbReference type="HOGENOM" id="CLU_098726_3_0_1"/>
<dbReference type="InParanoid" id="Q92371"/>
<dbReference type="OMA" id="AGDTYME"/>
<dbReference type="PhylomeDB" id="Q92371"/>
<dbReference type="PRO" id="PR:Q92371"/>
<dbReference type="Proteomes" id="UP000002485">
    <property type="component" value="Chromosome I"/>
</dbReference>
<dbReference type="GO" id="GO:0005829">
    <property type="term" value="C:cytosol"/>
    <property type="evidence" value="ECO:0007005"/>
    <property type="project" value="PomBase"/>
</dbReference>
<dbReference type="GO" id="GO:0005854">
    <property type="term" value="C:nascent polypeptide-associated complex"/>
    <property type="evidence" value="ECO:0000353"/>
    <property type="project" value="PomBase"/>
</dbReference>
<dbReference type="GO" id="GO:0005634">
    <property type="term" value="C:nucleus"/>
    <property type="evidence" value="ECO:0007669"/>
    <property type="project" value="UniProtKB-SubCell"/>
</dbReference>
<dbReference type="GO" id="GO:0051083">
    <property type="term" value="P:'de novo' cotranslational protein folding"/>
    <property type="evidence" value="ECO:0000266"/>
    <property type="project" value="PomBase"/>
</dbReference>
<dbReference type="GO" id="GO:0006613">
    <property type="term" value="P:cotranslational protein targeting to membrane"/>
    <property type="evidence" value="ECO:0000266"/>
    <property type="project" value="PomBase"/>
</dbReference>
<dbReference type="CDD" id="cd22055">
    <property type="entry name" value="NAC_BTF3"/>
    <property type="match status" value="1"/>
</dbReference>
<dbReference type="FunFam" id="2.20.70.30:FF:000001">
    <property type="entry name" value="Transcription factor BTF3 homolog"/>
    <property type="match status" value="1"/>
</dbReference>
<dbReference type="Gene3D" id="2.20.70.30">
    <property type="entry name" value="Nascent polypeptide-associated complex domain"/>
    <property type="match status" value="1"/>
</dbReference>
<dbReference type="InterPro" id="IPR039370">
    <property type="entry name" value="BTF3"/>
</dbReference>
<dbReference type="InterPro" id="IPR038187">
    <property type="entry name" value="NAC_A/B_dom_sf"/>
</dbReference>
<dbReference type="InterPro" id="IPR002715">
    <property type="entry name" value="Nas_poly-pep-assoc_cplx_dom"/>
</dbReference>
<dbReference type="PANTHER" id="PTHR10351">
    <property type="entry name" value="TRANSCRIPTION FACTOR BTF3 FAMILY MEMBER"/>
    <property type="match status" value="1"/>
</dbReference>
<dbReference type="Pfam" id="PF01849">
    <property type="entry name" value="NAC"/>
    <property type="match status" value="1"/>
</dbReference>
<dbReference type="SMART" id="SM01407">
    <property type="entry name" value="NAC"/>
    <property type="match status" value="1"/>
</dbReference>
<dbReference type="PROSITE" id="PS51151">
    <property type="entry name" value="NAC_AB"/>
    <property type="match status" value="1"/>
</dbReference>
<comment type="function">
    <text evidence="1">Component of the nascent polypeptide-associated complex (NAC), a dynamic component of the ribosomal exit tunnel, protecting the emerging polypeptides from interaction with other cytoplasmic proteins to ensure appropriate nascent protein targeting. The NAC complex also promotes mitochondrial protein import by enhancing productive ribosome interactions with the outer mitochondrial membrane and blocks the inappropriate interaction of ribosomes translating non-secretory nascent polypeptides with translocation sites in the membrane of the endoplasmic reticulum. EGD1 may act as a transcription factor that exert a negative effect on the expression of several genes that are transcribed by RNA polymerase II.</text>
</comment>
<comment type="subunit">
    <text evidence="1">Part of the nascent polypeptide-associated complex (NAC), consisting of ucp15 and btf3. NAC associates with ribosomes via btf3 (By similarity).</text>
</comment>
<comment type="subcellular location">
    <subcellularLocation>
        <location evidence="1">Cytoplasm</location>
    </subcellularLocation>
    <subcellularLocation>
        <location evidence="1">Nucleus</location>
    </subcellularLocation>
    <text evidence="1">Predominantly cytoplasmic, may also transiently localize to the nucleus.</text>
</comment>
<comment type="similarity">
    <text evidence="4">Belongs to the NAC-beta family.</text>
</comment>
<sequence length="151" mass="16202">MDPSKLAKLQAGARIGGKGTPRRKVKKPSKSAMSAADDKKVQGALKKLNMQNLAGIQEVNMFKEDGGVINFRAPTVHSSLPNETTAIYGKAEEKTLSEILPGILNNLGPESLTALRQMAEQLKVSEGEKGADAQADDGEIPDLVEKFDEQD</sequence>
<reference key="1">
    <citation type="journal article" date="1996" name="Biochim. Biophys. Acta">
        <title>BTF3 is evolutionarily conserved in fission yeast.</title>
        <authorList>
            <person name="Potashkin J."/>
            <person name="Wentz-Hunter K."/>
            <person name="Callaci J."/>
        </authorList>
    </citation>
    <scope>NUCLEOTIDE SEQUENCE [MRNA]</scope>
    <source>
        <strain>972 / ATCC 24843</strain>
    </source>
</reference>
<reference key="2">
    <citation type="journal article" date="2002" name="Nature">
        <title>The genome sequence of Schizosaccharomyces pombe.</title>
        <authorList>
            <person name="Wood V."/>
            <person name="Gwilliam R."/>
            <person name="Rajandream M.A."/>
            <person name="Lyne M.H."/>
            <person name="Lyne R."/>
            <person name="Stewart A."/>
            <person name="Sgouros J.G."/>
            <person name="Peat N."/>
            <person name="Hayles J."/>
            <person name="Baker S.G."/>
            <person name="Basham D."/>
            <person name="Bowman S."/>
            <person name="Brooks K."/>
            <person name="Brown D."/>
            <person name="Brown S."/>
            <person name="Chillingworth T."/>
            <person name="Churcher C.M."/>
            <person name="Collins M."/>
            <person name="Connor R."/>
            <person name="Cronin A."/>
            <person name="Davis P."/>
            <person name="Feltwell T."/>
            <person name="Fraser A."/>
            <person name="Gentles S."/>
            <person name="Goble A."/>
            <person name="Hamlin N."/>
            <person name="Harris D.E."/>
            <person name="Hidalgo J."/>
            <person name="Hodgson G."/>
            <person name="Holroyd S."/>
            <person name="Hornsby T."/>
            <person name="Howarth S."/>
            <person name="Huckle E.J."/>
            <person name="Hunt S."/>
            <person name="Jagels K."/>
            <person name="James K.D."/>
            <person name="Jones L."/>
            <person name="Jones M."/>
            <person name="Leather S."/>
            <person name="McDonald S."/>
            <person name="McLean J."/>
            <person name="Mooney P."/>
            <person name="Moule S."/>
            <person name="Mungall K.L."/>
            <person name="Murphy L.D."/>
            <person name="Niblett D."/>
            <person name="Odell C."/>
            <person name="Oliver K."/>
            <person name="O'Neil S."/>
            <person name="Pearson D."/>
            <person name="Quail M.A."/>
            <person name="Rabbinowitsch E."/>
            <person name="Rutherford K.M."/>
            <person name="Rutter S."/>
            <person name="Saunders D."/>
            <person name="Seeger K."/>
            <person name="Sharp S."/>
            <person name="Skelton J."/>
            <person name="Simmonds M.N."/>
            <person name="Squares R."/>
            <person name="Squares S."/>
            <person name="Stevens K."/>
            <person name="Taylor K."/>
            <person name="Taylor R.G."/>
            <person name="Tivey A."/>
            <person name="Walsh S.V."/>
            <person name="Warren T."/>
            <person name="Whitehead S."/>
            <person name="Woodward J.R."/>
            <person name="Volckaert G."/>
            <person name="Aert R."/>
            <person name="Robben J."/>
            <person name="Grymonprez B."/>
            <person name="Weltjens I."/>
            <person name="Vanstreels E."/>
            <person name="Rieger M."/>
            <person name="Schaefer M."/>
            <person name="Mueller-Auer S."/>
            <person name="Gabel C."/>
            <person name="Fuchs M."/>
            <person name="Duesterhoeft A."/>
            <person name="Fritzc C."/>
            <person name="Holzer E."/>
            <person name="Moestl D."/>
            <person name="Hilbert H."/>
            <person name="Borzym K."/>
            <person name="Langer I."/>
            <person name="Beck A."/>
            <person name="Lehrach H."/>
            <person name="Reinhardt R."/>
            <person name="Pohl T.M."/>
            <person name="Eger P."/>
            <person name="Zimmermann W."/>
            <person name="Wedler H."/>
            <person name="Wambutt R."/>
            <person name="Purnelle B."/>
            <person name="Goffeau A."/>
            <person name="Cadieu E."/>
            <person name="Dreano S."/>
            <person name="Gloux S."/>
            <person name="Lelaure V."/>
            <person name="Mottier S."/>
            <person name="Galibert F."/>
            <person name="Aves S.J."/>
            <person name="Xiang Z."/>
            <person name="Hunt C."/>
            <person name="Moore K."/>
            <person name="Hurst S.M."/>
            <person name="Lucas M."/>
            <person name="Rochet M."/>
            <person name="Gaillardin C."/>
            <person name="Tallada V.A."/>
            <person name="Garzon A."/>
            <person name="Thode G."/>
            <person name="Daga R.R."/>
            <person name="Cruzado L."/>
            <person name="Jimenez J."/>
            <person name="Sanchez M."/>
            <person name="del Rey F."/>
            <person name="Benito J."/>
            <person name="Dominguez A."/>
            <person name="Revuelta J.L."/>
            <person name="Moreno S."/>
            <person name="Armstrong J."/>
            <person name="Forsburg S.L."/>
            <person name="Cerutti L."/>
            <person name="Lowe T."/>
            <person name="McCombie W.R."/>
            <person name="Paulsen I."/>
            <person name="Potashkin J."/>
            <person name="Shpakovski G.V."/>
            <person name="Ussery D."/>
            <person name="Barrell B.G."/>
            <person name="Nurse P."/>
        </authorList>
    </citation>
    <scope>NUCLEOTIDE SEQUENCE [LARGE SCALE GENOMIC DNA]</scope>
    <source>
        <strain>972 / ATCC 24843</strain>
    </source>
</reference>
<accession>Q92371</accession>
<accession>O36026</accession>
<proteinExistence type="evidence at transcript level"/>
<feature type="chain" id="PRO_0000213553" description="Nascent polypeptide-associated complex subunit beta">
    <location>
        <begin position="1"/>
        <end position="151"/>
    </location>
</feature>
<feature type="domain" description="NAC-A/B" evidence="2">
    <location>
        <begin position="35"/>
        <end position="100"/>
    </location>
</feature>
<feature type="region of interest" description="Disordered" evidence="3">
    <location>
        <begin position="1"/>
        <end position="38"/>
    </location>
</feature>
<feature type="region of interest" description="Disordered" evidence="3">
    <location>
        <begin position="123"/>
        <end position="151"/>
    </location>
</feature>
<feature type="compositionally biased region" description="Basic residues" evidence="3">
    <location>
        <begin position="20"/>
        <end position="29"/>
    </location>
</feature>
<feature type="sequence conflict" description="In Ref. 1; AAB40599." evidence="4" ref="1">
    <original>I</original>
    <variation>N</variation>
    <location>
        <position position="103"/>
    </location>
</feature>
<evidence type="ECO:0000250" key="1"/>
<evidence type="ECO:0000255" key="2">
    <source>
        <dbReference type="PROSITE-ProRule" id="PRU00507"/>
    </source>
</evidence>
<evidence type="ECO:0000256" key="3">
    <source>
        <dbReference type="SAM" id="MobiDB-lite"/>
    </source>
</evidence>
<evidence type="ECO:0000305" key="4"/>
<protein>
    <recommendedName>
        <fullName>Nascent polypeptide-associated complex subunit beta</fullName>
        <shortName>NAC-beta</shortName>
    </recommendedName>
    <alternativeName>
        <fullName>Beta-NAC</fullName>
    </alternativeName>
</protein>
<gene>
    <name type="primary">btf3</name>
    <name type="synonym">egd1</name>
    <name type="ORF">SPAC4F10.14c</name>
</gene>
<organism>
    <name type="scientific">Schizosaccharomyces pombe (strain 972 / ATCC 24843)</name>
    <name type="common">Fission yeast</name>
    <dbReference type="NCBI Taxonomy" id="284812"/>
    <lineage>
        <taxon>Eukaryota</taxon>
        <taxon>Fungi</taxon>
        <taxon>Dikarya</taxon>
        <taxon>Ascomycota</taxon>
        <taxon>Taphrinomycotina</taxon>
        <taxon>Schizosaccharomycetes</taxon>
        <taxon>Schizosaccharomycetales</taxon>
        <taxon>Schizosaccharomycetaceae</taxon>
        <taxon>Schizosaccharomyces</taxon>
    </lineage>
</organism>